<proteinExistence type="inferred from homology"/>
<comment type="function">
    <text evidence="1">Transaldolase is important for the balance of metabolites in the pentose-phosphate pathway.</text>
</comment>
<comment type="catalytic activity">
    <reaction evidence="1">
        <text>D-sedoheptulose 7-phosphate + D-glyceraldehyde 3-phosphate = D-erythrose 4-phosphate + beta-D-fructose 6-phosphate</text>
        <dbReference type="Rhea" id="RHEA:17053"/>
        <dbReference type="ChEBI" id="CHEBI:16897"/>
        <dbReference type="ChEBI" id="CHEBI:57483"/>
        <dbReference type="ChEBI" id="CHEBI:57634"/>
        <dbReference type="ChEBI" id="CHEBI:59776"/>
        <dbReference type="EC" id="2.2.1.2"/>
    </reaction>
</comment>
<comment type="pathway">
    <text evidence="1">Carbohydrate degradation; pentose phosphate pathway; D-glyceraldehyde 3-phosphate and beta-D-fructose 6-phosphate from D-ribose 5-phosphate and D-xylulose 5-phosphate (non-oxidative stage): step 2/3.</text>
</comment>
<comment type="subcellular location">
    <subcellularLocation>
        <location evidence="1">Cytoplasm</location>
    </subcellularLocation>
</comment>
<comment type="similarity">
    <text evidence="1">Belongs to the transaldolase family. Type 3B subfamily.</text>
</comment>
<name>TAL_DINSH</name>
<gene>
    <name evidence="1" type="primary">tal</name>
    <name type="ordered locus">Dshi_1927</name>
</gene>
<protein>
    <recommendedName>
        <fullName evidence="1">Probable transaldolase</fullName>
        <ecNumber evidence="1">2.2.1.2</ecNumber>
    </recommendedName>
</protein>
<keyword id="KW-0963">Cytoplasm</keyword>
<keyword id="KW-0570">Pentose shunt</keyword>
<keyword id="KW-1185">Reference proteome</keyword>
<keyword id="KW-0704">Schiff base</keyword>
<keyword id="KW-0808">Transferase</keyword>
<dbReference type="EC" id="2.2.1.2" evidence="1"/>
<dbReference type="EMBL" id="CP000830">
    <property type="protein sequence ID" value="ABV93669.1"/>
    <property type="molecule type" value="Genomic_DNA"/>
</dbReference>
<dbReference type="RefSeq" id="WP_012178597.1">
    <property type="nucleotide sequence ID" value="NC_009952.1"/>
</dbReference>
<dbReference type="SMR" id="A8LNY7"/>
<dbReference type="STRING" id="398580.Dshi_1927"/>
<dbReference type="KEGG" id="dsh:Dshi_1927"/>
<dbReference type="eggNOG" id="COG0176">
    <property type="taxonomic scope" value="Bacteria"/>
</dbReference>
<dbReference type="HOGENOM" id="CLU_079764_0_0_5"/>
<dbReference type="OrthoDB" id="9807051at2"/>
<dbReference type="UniPathway" id="UPA00115">
    <property type="reaction ID" value="UER00414"/>
</dbReference>
<dbReference type="Proteomes" id="UP000006833">
    <property type="component" value="Chromosome"/>
</dbReference>
<dbReference type="GO" id="GO:0005737">
    <property type="term" value="C:cytoplasm"/>
    <property type="evidence" value="ECO:0007669"/>
    <property type="project" value="UniProtKB-SubCell"/>
</dbReference>
<dbReference type="GO" id="GO:0016832">
    <property type="term" value="F:aldehyde-lyase activity"/>
    <property type="evidence" value="ECO:0007669"/>
    <property type="project" value="InterPro"/>
</dbReference>
<dbReference type="GO" id="GO:0004801">
    <property type="term" value="F:transaldolase activity"/>
    <property type="evidence" value="ECO:0007669"/>
    <property type="project" value="UniProtKB-UniRule"/>
</dbReference>
<dbReference type="GO" id="GO:0005975">
    <property type="term" value="P:carbohydrate metabolic process"/>
    <property type="evidence" value="ECO:0007669"/>
    <property type="project" value="InterPro"/>
</dbReference>
<dbReference type="GO" id="GO:0006098">
    <property type="term" value="P:pentose-phosphate shunt"/>
    <property type="evidence" value="ECO:0007669"/>
    <property type="project" value="UniProtKB-UniRule"/>
</dbReference>
<dbReference type="CDD" id="cd00956">
    <property type="entry name" value="Transaldolase_FSA"/>
    <property type="match status" value="1"/>
</dbReference>
<dbReference type="FunFam" id="3.20.20.70:FF:000018">
    <property type="entry name" value="Probable transaldolase"/>
    <property type="match status" value="1"/>
</dbReference>
<dbReference type="Gene3D" id="3.20.20.70">
    <property type="entry name" value="Aldolase class I"/>
    <property type="match status" value="1"/>
</dbReference>
<dbReference type="HAMAP" id="MF_00494">
    <property type="entry name" value="Transaldolase_3b"/>
    <property type="match status" value="1"/>
</dbReference>
<dbReference type="InterPro" id="IPR013785">
    <property type="entry name" value="Aldolase_TIM"/>
</dbReference>
<dbReference type="InterPro" id="IPR001585">
    <property type="entry name" value="TAL/FSA"/>
</dbReference>
<dbReference type="InterPro" id="IPR022999">
    <property type="entry name" value="Transaldolase_3B"/>
</dbReference>
<dbReference type="InterPro" id="IPR004731">
    <property type="entry name" value="Transaldolase_3B/F6P_aldolase"/>
</dbReference>
<dbReference type="InterPro" id="IPR018225">
    <property type="entry name" value="Transaldolase_AS"/>
</dbReference>
<dbReference type="InterPro" id="IPR033919">
    <property type="entry name" value="TSA/FSA_arc/bac"/>
</dbReference>
<dbReference type="NCBIfam" id="TIGR00875">
    <property type="entry name" value="fsa_talC_mipB"/>
    <property type="match status" value="1"/>
</dbReference>
<dbReference type="PANTHER" id="PTHR10683:SF40">
    <property type="entry name" value="FRUCTOSE-6-PHOSPHATE ALDOLASE 1-RELATED"/>
    <property type="match status" value="1"/>
</dbReference>
<dbReference type="PANTHER" id="PTHR10683">
    <property type="entry name" value="TRANSALDOLASE"/>
    <property type="match status" value="1"/>
</dbReference>
<dbReference type="Pfam" id="PF00923">
    <property type="entry name" value="TAL_FSA"/>
    <property type="match status" value="1"/>
</dbReference>
<dbReference type="SUPFAM" id="SSF51569">
    <property type="entry name" value="Aldolase"/>
    <property type="match status" value="1"/>
</dbReference>
<dbReference type="PROSITE" id="PS01054">
    <property type="entry name" value="TRANSALDOLASE_1"/>
    <property type="match status" value="1"/>
</dbReference>
<dbReference type="PROSITE" id="PS00958">
    <property type="entry name" value="TRANSALDOLASE_2"/>
    <property type="match status" value="1"/>
</dbReference>
<sequence>MKFFVDTADVAAIAELNDLGMVDGVTTNPSLILKSGRDITEVTKEICELVDGPVSAEVVATQADAMIAEGRKLAEIAENITVKLPLTWDGLKACKTLTDEGKMVNVTLCFSANQALLAAKAGASFISPFIGRLDDLNVDGMELIEDIRTIYDNYGYETEILAASIRTVNHMKEAALIGADVATAPPGVIKQMANHVLTDKGLAAFLSDWEKTGQKIL</sequence>
<feature type="chain" id="PRO_1000126312" description="Probable transaldolase">
    <location>
        <begin position="1"/>
        <end position="217"/>
    </location>
</feature>
<feature type="active site" description="Schiff-base intermediate with substrate" evidence="1">
    <location>
        <position position="83"/>
    </location>
</feature>
<organism>
    <name type="scientific">Dinoroseobacter shibae (strain DSM 16493 / NCIMB 14021 / DFL 12)</name>
    <dbReference type="NCBI Taxonomy" id="398580"/>
    <lineage>
        <taxon>Bacteria</taxon>
        <taxon>Pseudomonadati</taxon>
        <taxon>Pseudomonadota</taxon>
        <taxon>Alphaproteobacteria</taxon>
        <taxon>Rhodobacterales</taxon>
        <taxon>Roseobacteraceae</taxon>
        <taxon>Dinoroseobacter</taxon>
    </lineage>
</organism>
<reference key="1">
    <citation type="journal article" date="2010" name="ISME J.">
        <title>The complete genome sequence of the algal symbiont Dinoroseobacter shibae: a hitchhiker's guide to life in the sea.</title>
        <authorList>
            <person name="Wagner-Dobler I."/>
            <person name="Ballhausen B."/>
            <person name="Berger M."/>
            <person name="Brinkhoff T."/>
            <person name="Buchholz I."/>
            <person name="Bunk B."/>
            <person name="Cypionka H."/>
            <person name="Daniel R."/>
            <person name="Drepper T."/>
            <person name="Gerdts G."/>
            <person name="Hahnke S."/>
            <person name="Han C."/>
            <person name="Jahn D."/>
            <person name="Kalhoefer D."/>
            <person name="Kiss H."/>
            <person name="Klenk H.P."/>
            <person name="Kyrpides N."/>
            <person name="Liebl W."/>
            <person name="Liesegang H."/>
            <person name="Meincke L."/>
            <person name="Pati A."/>
            <person name="Petersen J."/>
            <person name="Piekarski T."/>
            <person name="Pommerenke C."/>
            <person name="Pradella S."/>
            <person name="Pukall R."/>
            <person name="Rabus R."/>
            <person name="Stackebrandt E."/>
            <person name="Thole S."/>
            <person name="Thompson L."/>
            <person name="Tielen P."/>
            <person name="Tomasch J."/>
            <person name="von Jan M."/>
            <person name="Wanphrut N."/>
            <person name="Wichels A."/>
            <person name="Zech H."/>
            <person name="Simon M."/>
        </authorList>
    </citation>
    <scope>NUCLEOTIDE SEQUENCE [LARGE SCALE GENOMIC DNA]</scope>
    <source>
        <strain>DSM 16493 / NCIMB 14021 / DFL 12</strain>
    </source>
</reference>
<evidence type="ECO:0000255" key="1">
    <source>
        <dbReference type="HAMAP-Rule" id="MF_00494"/>
    </source>
</evidence>
<accession>A8LNY7</accession>